<sequence length="110" mass="12553">MSFCSFSGGEIYKDHFESGMYVCAQCGYELFSSRSKYEHSSPWPAFTETIHEDSVSKQEERWGAYKVRCGKCGNGLGHEFVNDGPKHGLSRFUIFSSSLKFIPKVKNEQQ</sequence>
<reference key="1">
    <citation type="journal article" date="2003" name="Gene Expr. Patterns">
        <title>Spatial and temporal expression patterns of selenoprotein genes during embryogenesis in zebrafish.</title>
        <authorList>
            <person name="Thisse C."/>
            <person name="Degrave A."/>
            <person name="Kryukov G.V."/>
            <person name="Gladyshev V.N."/>
            <person name="Obrecht-Pflumio S."/>
            <person name="Krol A."/>
            <person name="Thisse B."/>
            <person name="Lescure A."/>
        </authorList>
    </citation>
    <scope>NUCLEOTIDE SEQUENCE [MRNA]</scope>
    <scope>TISSUE SPECIFICITY</scope>
    <source>
        <tissue>Embryo</tissue>
    </source>
</reference>
<reference key="2">
    <citation type="submission" date="2004-03" db="EMBL/GenBank/DDBJ databases">
        <authorList>
            <consortium name="NIH - Zebrafish Gene Collection (ZGC) project"/>
        </authorList>
    </citation>
    <scope>NUCLEOTIDE SEQUENCE [LARGE SCALE MRNA]</scope>
    <source>
        <tissue>Kidney</tissue>
    </source>
</reference>
<evidence type="ECO:0000250" key="1">
    <source>
        <dbReference type="UniProtKB" id="Q9JLC3"/>
    </source>
</evidence>
<evidence type="ECO:0000250" key="2">
    <source>
        <dbReference type="UniProtKB" id="Q9NZV6"/>
    </source>
</evidence>
<evidence type="ECO:0000255" key="3">
    <source>
        <dbReference type="PROSITE-ProRule" id="PRU01126"/>
    </source>
</evidence>
<evidence type="ECO:0000269" key="4">
    <source>
    </source>
</evidence>
<evidence type="ECO:0000305" key="5"/>
<comment type="function">
    <text evidence="1">Methionine-sulfoxide reductase that specifically reduces methionine (R)-sulfoxide back to methionine. While in many cases, methionine oxidation is the result of random oxidation following oxidative stress, methionine oxidation is also a post-translational modification that takes place on specific residue. Acts as a regulator of actin assembly by reducing methionine (R)-sulfoxide mediated by MICALs (mical1, mical2 or mical3) on actin, thereby promoting filament repolymerization. Plays a role in innate immunity by reducing oxidized actin, leading to actin repolymerization in macrophages.</text>
</comment>
<comment type="catalytic activity">
    <reaction evidence="1">
        <text>L-methionyl-[protein] + [thioredoxin]-disulfide + H2O = L-methionyl-(R)-S-oxide-[protein] + [thioredoxin]-dithiol</text>
        <dbReference type="Rhea" id="RHEA:24164"/>
        <dbReference type="Rhea" id="RHEA-COMP:10698"/>
        <dbReference type="Rhea" id="RHEA-COMP:10700"/>
        <dbReference type="Rhea" id="RHEA-COMP:12313"/>
        <dbReference type="Rhea" id="RHEA-COMP:12314"/>
        <dbReference type="ChEBI" id="CHEBI:15377"/>
        <dbReference type="ChEBI" id="CHEBI:16044"/>
        <dbReference type="ChEBI" id="CHEBI:29950"/>
        <dbReference type="ChEBI" id="CHEBI:45764"/>
        <dbReference type="ChEBI" id="CHEBI:50058"/>
        <dbReference type="EC" id="1.8.4.12"/>
    </reaction>
</comment>
<comment type="catalytic activity">
    <reaction evidence="1">
        <text>[thioredoxin]-disulfide + L-methionine + H2O = L-methionine (R)-S-oxide + [thioredoxin]-dithiol</text>
        <dbReference type="Rhea" id="RHEA:21260"/>
        <dbReference type="Rhea" id="RHEA-COMP:10698"/>
        <dbReference type="Rhea" id="RHEA-COMP:10700"/>
        <dbReference type="ChEBI" id="CHEBI:15377"/>
        <dbReference type="ChEBI" id="CHEBI:29950"/>
        <dbReference type="ChEBI" id="CHEBI:50058"/>
        <dbReference type="ChEBI" id="CHEBI:57844"/>
        <dbReference type="ChEBI" id="CHEBI:58773"/>
        <dbReference type="EC" id="1.8.4.14"/>
    </reaction>
</comment>
<comment type="cofactor">
    <cofactor evidence="1">
        <name>Zn(2+)</name>
        <dbReference type="ChEBI" id="CHEBI:29105"/>
    </cofactor>
    <text evidence="1">Binds 1 zinc ion per subunit.</text>
</comment>
<comment type="subcellular location">
    <subcellularLocation>
        <location evidence="1">Cytoplasm</location>
    </subcellularLocation>
    <subcellularLocation>
        <location evidence="1">Nucleus</location>
    </subcellularLocation>
    <subcellularLocation>
        <location evidence="1">Cytoplasm</location>
        <location evidence="1">Cytoskeleton</location>
    </subcellularLocation>
</comment>
<comment type="tissue specificity">
    <text evidence="4">In the embryo, expressed in the polster, paraxial mesoderm, tectum, otic vesicle and liver.</text>
</comment>
<comment type="similarity">
    <text evidence="5">Belongs to the MsrB Met sulfoxide reductase family.</text>
</comment>
<organism>
    <name type="scientific">Danio rerio</name>
    <name type="common">Zebrafish</name>
    <name type="synonym">Brachydanio rerio</name>
    <dbReference type="NCBI Taxonomy" id="7955"/>
    <lineage>
        <taxon>Eukaryota</taxon>
        <taxon>Metazoa</taxon>
        <taxon>Chordata</taxon>
        <taxon>Craniata</taxon>
        <taxon>Vertebrata</taxon>
        <taxon>Euteleostomi</taxon>
        <taxon>Actinopterygii</taxon>
        <taxon>Neopterygii</taxon>
        <taxon>Teleostei</taxon>
        <taxon>Ostariophysi</taxon>
        <taxon>Cypriniformes</taxon>
        <taxon>Danionidae</taxon>
        <taxon>Danioninae</taxon>
        <taxon>Danio</taxon>
    </lineage>
</organism>
<name>MSB1A_DANRE</name>
<accession>Q802G6</accession>
<accession>Q6NWX6</accession>
<protein>
    <recommendedName>
        <fullName>Methionine-R-sulfoxide reductase B1-A</fullName>
        <shortName>MsrB</shortName>
        <shortName>MsrB1-A</shortName>
        <ecNumber evidence="1">1.8.4.12</ecNumber>
        <ecNumber evidence="1">1.8.4.14</ecNumber>
    </recommendedName>
    <alternativeName>
        <fullName>Selenoprotein X-A</fullName>
        <shortName>SePR</shortName>
        <shortName>SelX-A</shortName>
    </alternativeName>
</protein>
<feature type="chain" id="PRO_0000318636" description="Methionine-R-sulfoxide reductase B1-A">
    <location>
        <begin position="1"/>
        <end position="110"/>
    </location>
</feature>
<feature type="domain" description="MsrB" evidence="3">
    <location>
        <begin position="1"/>
        <end position="104"/>
    </location>
</feature>
<feature type="active site" description="Nucleophile" evidence="3">
    <location>
        <position position="93"/>
    </location>
</feature>
<feature type="binding site" evidence="3">
    <location>
        <position position="23"/>
    </location>
    <ligand>
        <name>Zn(2+)</name>
        <dbReference type="ChEBI" id="CHEBI:29105"/>
    </ligand>
</feature>
<feature type="binding site" evidence="3">
    <location>
        <position position="26"/>
    </location>
    <ligand>
        <name>Zn(2+)</name>
        <dbReference type="ChEBI" id="CHEBI:29105"/>
    </ligand>
</feature>
<feature type="binding site" evidence="3">
    <location>
        <position position="69"/>
    </location>
    <ligand>
        <name>Zn(2+)</name>
        <dbReference type="ChEBI" id="CHEBI:29105"/>
    </ligand>
</feature>
<feature type="binding site" evidence="3">
    <location>
        <position position="72"/>
    </location>
    <ligand>
        <name>Zn(2+)</name>
        <dbReference type="ChEBI" id="CHEBI:29105"/>
    </ligand>
</feature>
<feature type="non-standard amino acid" description="Selenocysteine" evidence="2">
    <location>
        <position position="93"/>
    </location>
</feature>
<feature type="sequence conflict" description="In Ref. 1; AAO86699." evidence="5" ref="1">
    <original>E</original>
    <variation>K</variation>
    <location>
        <position position="52"/>
    </location>
</feature>
<gene>
    <name type="primary">msrb1</name>
    <name type="synonym">sepx1</name>
    <name type="synonym">sepx1a</name>
</gene>
<keyword id="KW-0963">Cytoplasm</keyword>
<keyword id="KW-0206">Cytoskeleton</keyword>
<keyword id="KW-0391">Immunity</keyword>
<keyword id="KW-0399">Innate immunity</keyword>
<keyword id="KW-0479">Metal-binding</keyword>
<keyword id="KW-0539">Nucleus</keyword>
<keyword id="KW-0560">Oxidoreductase</keyword>
<keyword id="KW-1185">Reference proteome</keyword>
<keyword id="KW-0712">Selenocysteine</keyword>
<keyword id="KW-0862">Zinc</keyword>
<dbReference type="EC" id="1.8.4.12" evidence="1"/>
<dbReference type="EC" id="1.8.4.14" evidence="1"/>
<dbReference type="EMBL" id="AY216585">
    <property type="protein sequence ID" value="AAO86699.1"/>
    <property type="molecule type" value="mRNA"/>
</dbReference>
<dbReference type="EMBL" id="BC067380">
    <property type="protein sequence ID" value="AAH67380.1"/>
    <property type="molecule type" value="mRNA"/>
</dbReference>
<dbReference type="FunCoup" id="Q802G6">
    <property type="interactions" value="695"/>
</dbReference>
<dbReference type="STRING" id="7955.ENSDARP00000122736"/>
<dbReference type="PaxDb" id="7955-ENSDARP00000115071"/>
<dbReference type="Ensembl" id="ENSDART00000131758">
    <property type="protein sequence ID" value="ENSDARP00000122736"/>
    <property type="gene ID" value="ENSDARG00000025436"/>
</dbReference>
<dbReference type="GeneID" id="352916"/>
<dbReference type="KEGG" id="dre:352916"/>
<dbReference type="AGR" id="ZFIN:ZDB-GENE-030411-3"/>
<dbReference type="CTD" id="352916"/>
<dbReference type="ZFIN" id="ZDB-GENE-030411-3">
    <property type="gene designation" value="msrb1a"/>
</dbReference>
<dbReference type="eggNOG" id="KOG0856">
    <property type="taxonomic scope" value="Eukaryota"/>
</dbReference>
<dbReference type="HOGENOM" id="CLU_147472_1_0_1"/>
<dbReference type="InParanoid" id="Q802G6"/>
<dbReference type="OrthoDB" id="44061at2759"/>
<dbReference type="PhylomeDB" id="Q802G6"/>
<dbReference type="Reactome" id="R-DRE-5676934">
    <property type="pathway name" value="Protein repair"/>
</dbReference>
<dbReference type="PRO" id="PR:Q802G6"/>
<dbReference type="Proteomes" id="UP000000437">
    <property type="component" value="Chromosome 3"/>
</dbReference>
<dbReference type="Bgee" id="ENSDARG00000025436">
    <property type="expression patterns" value="Expressed in head kidney and 39 other cell types or tissues"/>
</dbReference>
<dbReference type="ExpressionAtlas" id="Q802G6">
    <property type="expression patterns" value="baseline and differential"/>
</dbReference>
<dbReference type="GO" id="GO:0005737">
    <property type="term" value="C:cytoplasm"/>
    <property type="evidence" value="ECO:0007669"/>
    <property type="project" value="UniProtKB-SubCell"/>
</dbReference>
<dbReference type="GO" id="GO:0005856">
    <property type="term" value="C:cytoskeleton"/>
    <property type="evidence" value="ECO:0007669"/>
    <property type="project" value="UniProtKB-SubCell"/>
</dbReference>
<dbReference type="GO" id="GO:0005634">
    <property type="term" value="C:nucleus"/>
    <property type="evidence" value="ECO:0000318"/>
    <property type="project" value="GO_Central"/>
</dbReference>
<dbReference type="GO" id="GO:0003779">
    <property type="term" value="F:actin binding"/>
    <property type="evidence" value="ECO:0000250"/>
    <property type="project" value="UniProtKB"/>
</dbReference>
<dbReference type="GO" id="GO:0033745">
    <property type="term" value="F:L-methionine-(R)-S-oxide reductase activity"/>
    <property type="evidence" value="ECO:0007669"/>
    <property type="project" value="UniProtKB-EC"/>
</dbReference>
<dbReference type="GO" id="GO:0046872">
    <property type="term" value="F:metal ion binding"/>
    <property type="evidence" value="ECO:0007669"/>
    <property type="project" value="UniProtKB-KW"/>
</dbReference>
<dbReference type="GO" id="GO:0033743">
    <property type="term" value="F:peptide-methionine (R)-S-oxide reductase activity"/>
    <property type="evidence" value="ECO:0000250"/>
    <property type="project" value="UniProtKB"/>
</dbReference>
<dbReference type="GO" id="GO:0030041">
    <property type="term" value="P:actin filament polymerization"/>
    <property type="evidence" value="ECO:0000250"/>
    <property type="project" value="UniProtKB"/>
</dbReference>
<dbReference type="GO" id="GO:0045087">
    <property type="term" value="P:innate immune response"/>
    <property type="evidence" value="ECO:0000250"/>
    <property type="project" value="UniProtKB"/>
</dbReference>
<dbReference type="GO" id="GO:0030091">
    <property type="term" value="P:protein repair"/>
    <property type="evidence" value="ECO:0000318"/>
    <property type="project" value="GO_Central"/>
</dbReference>
<dbReference type="FunFam" id="2.170.150.20:FF:000008">
    <property type="entry name" value="methionine-R-sulfoxide reductase B1"/>
    <property type="match status" value="1"/>
</dbReference>
<dbReference type="Gene3D" id="2.170.150.20">
    <property type="entry name" value="Peptide methionine sulfoxide reductase"/>
    <property type="match status" value="1"/>
</dbReference>
<dbReference type="InterPro" id="IPR002579">
    <property type="entry name" value="Met_Sox_Rdtase_MsrB_dom"/>
</dbReference>
<dbReference type="InterPro" id="IPR052150">
    <property type="entry name" value="MsrB_Met_sulfoxide_reductase"/>
</dbReference>
<dbReference type="InterPro" id="IPR011057">
    <property type="entry name" value="Mss4-like_sf"/>
</dbReference>
<dbReference type="PANTHER" id="PTHR46755">
    <property type="entry name" value="METHIONINE-R-SULFOXIDE REDUCTASE B1"/>
    <property type="match status" value="1"/>
</dbReference>
<dbReference type="PANTHER" id="PTHR46755:SF5">
    <property type="entry name" value="METHIONINE-R-SULFOXIDE REDUCTASE B1"/>
    <property type="match status" value="1"/>
</dbReference>
<dbReference type="Pfam" id="PF01641">
    <property type="entry name" value="SelR"/>
    <property type="match status" value="1"/>
</dbReference>
<dbReference type="SUPFAM" id="SSF51316">
    <property type="entry name" value="Mss4-like"/>
    <property type="match status" value="1"/>
</dbReference>
<dbReference type="PROSITE" id="PS51790">
    <property type="entry name" value="MSRB"/>
    <property type="match status" value="1"/>
</dbReference>
<proteinExistence type="evidence at transcript level"/>